<gene>
    <name evidence="1" type="primary">gatA</name>
    <name type="ordered locus">Rpic_3692</name>
</gene>
<sequence>MTASTIKALSAQLAAKEVSAEELARHYLSRIEAGAHLNAFTHVDAEATLAQARAADARIAAGNAAPLTGVPIAHKDVFVTRGWRATAGSKMLGNYVSPFDATVVERLGAAGMVTLGKTNMDEFAMGSSNENSAFGAVKNPWNLEHVPGGSSGGSAAAVAADLAPAATGTDTGGSIRQPASFSGITGIKPTYGRVSRYGMIAFASSLDQGGPMARTAEDCALLLSAMAGFDPRDSTSLEPGRGGDVEDFGRLLGQPLQGADAARPLAGLRIGLPKEYFGEGLADDVRTTVRAALAELEKLGATLVDISLPKTELSIPTYYVIAPAEASSNLSRFDGVRYGHRAAEYRDLADMYRKSRAEGFGWEVKRRILVGAYVLSHGYYDAYYLQAQKIRRIIAQDFQNVLAGANRQCDVIMGPVAPTVAWKLGEKTSDPVQMYLADIFTLSTSLAGLPGMSVPAGFGANGLPVGLQIIGNYFEEARMLQIAHAFQQATDWHHRQPAA</sequence>
<proteinExistence type="inferred from homology"/>
<evidence type="ECO:0000255" key="1">
    <source>
        <dbReference type="HAMAP-Rule" id="MF_00120"/>
    </source>
</evidence>
<comment type="function">
    <text evidence="1">Allows the formation of correctly charged Gln-tRNA(Gln) through the transamidation of misacylated Glu-tRNA(Gln) in organisms which lack glutaminyl-tRNA synthetase. The reaction takes place in the presence of glutamine and ATP through an activated gamma-phospho-Glu-tRNA(Gln).</text>
</comment>
<comment type="catalytic activity">
    <reaction evidence="1">
        <text>L-glutamyl-tRNA(Gln) + L-glutamine + ATP + H2O = L-glutaminyl-tRNA(Gln) + L-glutamate + ADP + phosphate + H(+)</text>
        <dbReference type="Rhea" id="RHEA:17521"/>
        <dbReference type="Rhea" id="RHEA-COMP:9681"/>
        <dbReference type="Rhea" id="RHEA-COMP:9684"/>
        <dbReference type="ChEBI" id="CHEBI:15377"/>
        <dbReference type="ChEBI" id="CHEBI:15378"/>
        <dbReference type="ChEBI" id="CHEBI:29985"/>
        <dbReference type="ChEBI" id="CHEBI:30616"/>
        <dbReference type="ChEBI" id="CHEBI:43474"/>
        <dbReference type="ChEBI" id="CHEBI:58359"/>
        <dbReference type="ChEBI" id="CHEBI:78520"/>
        <dbReference type="ChEBI" id="CHEBI:78521"/>
        <dbReference type="ChEBI" id="CHEBI:456216"/>
        <dbReference type="EC" id="6.3.5.7"/>
    </reaction>
</comment>
<comment type="subunit">
    <text evidence="1">Heterotrimer of A, B and C subunits.</text>
</comment>
<comment type="similarity">
    <text evidence="1">Belongs to the amidase family. GatA subfamily.</text>
</comment>
<organism>
    <name type="scientific">Ralstonia pickettii (strain 12J)</name>
    <dbReference type="NCBI Taxonomy" id="402626"/>
    <lineage>
        <taxon>Bacteria</taxon>
        <taxon>Pseudomonadati</taxon>
        <taxon>Pseudomonadota</taxon>
        <taxon>Betaproteobacteria</taxon>
        <taxon>Burkholderiales</taxon>
        <taxon>Burkholderiaceae</taxon>
        <taxon>Ralstonia</taxon>
    </lineage>
</organism>
<reference key="1">
    <citation type="submission" date="2008-05" db="EMBL/GenBank/DDBJ databases">
        <title>Complete sequence of chromosome 1 of Ralstonia pickettii 12J.</title>
        <authorList>
            <person name="Lucas S."/>
            <person name="Copeland A."/>
            <person name="Lapidus A."/>
            <person name="Glavina del Rio T."/>
            <person name="Dalin E."/>
            <person name="Tice H."/>
            <person name="Bruce D."/>
            <person name="Goodwin L."/>
            <person name="Pitluck S."/>
            <person name="Meincke L."/>
            <person name="Brettin T."/>
            <person name="Detter J.C."/>
            <person name="Han C."/>
            <person name="Kuske C.R."/>
            <person name="Schmutz J."/>
            <person name="Larimer F."/>
            <person name="Land M."/>
            <person name="Hauser L."/>
            <person name="Kyrpides N."/>
            <person name="Mikhailova N."/>
            <person name="Marsh T."/>
            <person name="Richardson P."/>
        </authorList>
    </citation>
    <scope>NUCLEOTIDE SEQUENCE [LARGE SCALE GENOMIC DNA]</scope>
    <source>
        <strain>12J</strain>
    </source>
</reference>
<protein>
    <recommendedName>
        <fullName evidence="1">Glutamyl-tRNA(Gln) amidotransferase subunit A</fullName>
        <shortName evidence="1">Glu-ADT subunit A</shortName>
        <ecNumber evidence="1">6.3.5.7</ecNumber>
    </recommendedName>
</protein>
<dbReference type="EC" id="6.3.5.7" evidence="1"/>
<dbReference type="EMBL" id="CP001068">
    <property type="protein sequence ID" value="ACD28810.1"/>
    <property type="molecule type" value="Genomic_DNA"/>
</dbReference>
<dbReference type="SMR" id="B2U7V7"/>
<dbReference type="STRING" id="402626.Rpic_3692"/>
<dbReference type="KEGG" id="rpi:Rpic_3692"/>
<dbReference type="eggNOG" id="COG0154">
    <property type="taxonomic scope" value="Bacteria"/>
</dbReference>
<dbReference type="HOGENOM" id="CLU_009600_0_3_4"/>
<dbReference type="GO" id="GO:0030956">
    <property type="term" value="C:glutamyl-tRNA(Gln) amidotransferase complex"/>
    <property type="evidence" value="ECO:0007669"/>
    <property type="project" value="InterPro"/>
</dbReference>
<dbReference type="GO" id="GO:0005524">
    <property type="term" value="F:ATP binding"/>
    <property type="evidence" value="ECO:0007669"/>
    <property type="project" value="UniProtKB-KW"/>
</dbReference>
<dbReference type="GO" id="GO:0050567">
    <property type="term" value="F:glutaminyl-tRNA synthase (glutamine-hydrolyzing) activity"/>
    <property type="evidence" value="ECO:0007669"/>
    <property type="project" value="UniProtKB-UniRule"/>
</dbReference>
<dbReference type="GO" id="GO:0006412">
    <property type="term" value="P:translation"/>
    <property type="evidence" value="ECO:0007669"/>
    <property type="project" value="UniProtKB-UniRule"/>
</dbReference>
<dbReference type="Gene3D" id="3.90.1300.10">
    <property type="entry name" value="Amidase signature (AS) domain"/>
    <property type="match status" value="1"/>
</dbReference>
<dbReference type="HAMAP" id="MF_00120">
    <property type="entry name" value="GatA"/>
    <property type="match status" value="1"/>
</dbReference>
<dbReference type="InterPro" id="IPR000120">
    <property type="entry name" value="Amidase"/>
</dbReference>
<dbReference type="InterPro" id="IPR020556">
    <property type="entry name" value="Amidase_CS"/>
</dbReference>
<dbReference type="InterPro" id="IPR023631">
    <property type="entry name" value="Amidase_dom"/>
</dbReference>
<dbReference type="InterPro" id="IPR036928">
    <property type="entry name" value="AS_sf"/>
</dbReference>
<dbReference type="InterPro" id="IPR004412">
    <property type="entry name" value="GatA"/>
</dbReference>
<dbReference type="NCBIfam" id="TIGR00132">
    <property type="entry name" value="gatA"/>
    <property type="match status" value="1"/>
</dbReference>
<dbReference type="PANTHER" id="PTHR11895:SF151">
    <property type="entry name" value="GLUTAMYL-TRNA(GLN) AMIDOTRANSFERASE SUBUNIT A"/>
    <property type="match status" value="1"/>
</dbReference>
<dbReference type="PANTHER" id="PTHR11895">
    <property type="entry name" value="TRANSAMIDASE"/>
    <property type="match status" value="1"/>
</dbReference>
<dbReference type="Pfam" id="PF01425">
    <property type="entry name" value="Amidase"/>
    <property type="match status" value="1"/>
</dbReference>
<dbReference type="SUPFAM" id="SSF75304">
    <property type="entry name" value="Amidase signature (AS) enzymes"/>
    <property type="match status" value="1"/>
</dbReference>
<dbReference type="PROSITE" id="PS00571">
    <property type="entry name" value="AMIDASES"/>
    <property type="match status" value="1"/>
</dbReference>
<feature type="chain" id="PRO_1000095163" description="Glutamyl-tRNA(Gln) amidotransferase subunit A">
    <location>
        <begin position="1"/>
        <end position="499"/>
    </location>
</feature>
<feature type="active site" description="Charge relay system" evidence="1">
    <location>
        <position position="75"/>
    </location>
</feature>
<feature type="active site" description="Charge relay system" evidence="1">
    <location>
        <position position="150"/>
    </location>
</feature>
<feature type="active site" description="Acyl-ester intermediate" evidence="1">
    <location>
        <position position="174"/>
    </location>
</feature>
<keyword id="KW-0067">ATP-binding</keyword>
<keyword id="KW-0436">Ligase</keyword>
<keyword id="KW-0547">Nucleotide-binding</keyword>
<keyword id="KW-0648">Protein biosynthesis</keyword>
<name>GATA_RALPJ</name>
<accession>B2U7V7</accession>